<comment type="catalytic activity">
    <reaction evidence="1">
        <text>beta-D-fructose 1,6-bisphosphate + H2O = beta-D-fructose 6-phosphate + phosphate</text>
        <dbReference type="Rhea" id="RHEA:11064"/>
        <dbReference type="ChEBI" id="CHEBI:15377"/>
        <dbReference type="ChEBI" id="CHEBI:32966"/>
        <dbReference type="ChEBI" id="CHEBI:43474"/>
        <dbReference type="ChEBI" id="CHEBI:57634"/>
        <dbReference type="EC" id="3.1.3.11"/>
    </reaction>
</comment>
<comment type="cofactor">
    <cofactor evidence="1">
        <name>Mg(2+)</name>
        <dbReference type="ChEBI" id="CHEBI:18420"/>
    </cofactor>
    <text evidence="1">Binds 2 magnesium ions per subunit.</text>
</comment>
<comment type="pathway">
    <text evidence="1">Carbohydrate biosynthesis; gluconeogenesis.</text>
</comment>
<comment type="subunit">
    <text evidence="1">Homotetramer.</text>
</comment>
<comment type="subcellular location">
    <subcellularLocation>
        <location evidence="1">Cytoplasm</location>
    </subcellularLocation>
</comment>
<comment type="similarity">
    <text evidence="1">Belongs to the FBPase class 1 family.</text>
</comment>
<proteinExistence type="inferred from homology"/>
<organism>
    <name type="scientific">Brucella melitensis biotype 2 (strain ATCC 23457)</name>
    <dbReference type="NCBI Taxonomy" id="546272"/>
    <lineage>
        <taxon>Bacteria</taxon>
        <taxon>Pseudomonadati</taxon>
        <taxon>Pseudomonadota</taxon>
        <taxon>Alphaproteobacteria</taxon>
        <taxon>Hyphomicrobiales</taxon>
        <taxon>Brucellaceae</taxon>
        <taxon>Brucella/Ochrobactrum group</taxon>
        <taxon>Brucella</taxon>
    </lineage>
</organism>
<evidence type="ECO:0000255" key="1">
    <source>
        <dbReference type="HAMAP-Rule" id="MF_01855"/>
    </source>
</evidence>
<dbReference type="EC" id="3.1.3.11" evidence="1"/>
<dbReference type="EMBL" id="CP001489">
    <property type="protein sequence ID" value="ACO02652.1"/>
    <property type="molecule type" value="Genomic_DNA"/>
</dbReference>
<dbReference type="RefSeq" id="WP_002965774.1">
    <property type="nucleotide sequence ID" value="NC_012442.1"/>
</dbReference>
<dbReference type="SMR" id="C0RM19"/>
<dbReference type="KEGG" id="bmi:BMEA_B0851"/>
<dbReference type="HOGENOM" id="CLU_039977_0_0_5"/>
<dbReference type="UniPathway" id="UPA00138"/>
<dbReference type="Proteomes" id="UP000001748">
    <property type="component" value="Chromosome II"/>
</dbReference>
<dbReference type="GO" id="GO:0005829">
    <property type="term" value="C:cytosol"/>
    <property type="evidence" value="ECO:0007669"/>
    <property type="project" value="TreeGrafter"/>
</dbReference>
<dbReference type="GO" id="GO:0042132">
    <property type="term" value="F:fructose 1,6-bisphosphate 1-phosphatase activity"/>
    <property type="evidence" value="ECO:0007669"/>
    <property type="project" value="UniProtKB-UniRule"/>
</dbReference>
<dbReference type="GO" id="GO:0000287">
    <property type="term" value="F:magnesium ion binding"/>
    <property type="evidence" value="ECO:0007669"/>
    <property type="project" value="UniProtKB-UniRule"/>
</dbReference>
<dbReference type="GO" id="GO:0030388">
    <property type="term" value="P:fructose 1,6-bisphosphate metabolic process"/>
    <property type="evidence" value="ECO:0007669"/>
    <property type="project" value="TreeGrafter"/>
</dbReference>
<dbReference type="GO" id="GO:0006002">
    <property type="term" value="P:fructose 6-phosphate metabolic process"/>
    <property type="evidence" value="ECO:0007669"/>
    <property type="project" value="TreeGrafter"/>
</dbReference>
<dbReference type="GO" id="GO:0006000">
    <property type="term" value="P:fructose metabolic process"/>
    <property type="evidence" value="ECO:0007669"/>
    <property type="project" value="TreeGrafter"/>
</dbReference>
<dbReference type="GO" id="GO:0006094">
    <property type="term" value="P:gluconeogenesis"/>
    <property type="evidence" value="ECO:0007669"/>
    <property type="project" value="UniProtKB-UniRule"/>
</dbReference>
<dbReference type="GO" id="GO:0005986">
    <property type="term" value="P:sucrose biosynthetic process"/>
    <property type="evidence" value="ECO:0007669"/>
    <property type="project" value="TreeGrafter"/>
</dbReference>
<dbReference type="CDD" id="cd00354">
    <property type="entry name" value="FBPase"/>
    <property type="match status" value="1"/>
</dbReference>
<dbReference type="Gene3D" id="3.40.190.80">
    <property type="match status" value="1"/>
</dbReference>
<dbReference type="Gene3D" id="3.30.540.10">
    <property type="entry name" value="Fructose-1,6-Bisphosphatase, subunit A, domain 1"/>
    <property type="match status" value="1"/>
</dbReference>
<dbReference type="HAMAP" id="MF_01855">
    <property type="entry name" value="FBPase_class1"/>
    <property type="match status" value="1"/>
</dbReference>
<dbReference type="InterPro" id="IPR044015">
    <property type="entry name" value="FBPase_C_dom"/>
</dbReference>
<dbReference type="InterPro" id="IPR000146">
    <property type="entry name" value="FBPase_class-1"/>
</dbReference>
<dbReference type="InterPro" id="IPR033391">
    <property type="entry name" value="FBPase_N"/>
</dbReference>
<dbReference type="InterPro" id="IPR028343">
    <property type="entry name" value="FBPtase"/>
</dbReference>
<dbReference type="InterPro" id="IPR020548">
    <property type="entry name" value="Fructose_bisphosphatase_AS"/>
</dbReference>
<dbReference type="NCBIfam" id="NF006780">
    <property type="entry name" value="PRK09293.1-4"/>
    <property type="match status" value="1"/>
</dbReference>
<dbReference type="PANTHER" id="PTHR11556">
    <property type="entry name" value="FRUCTOSE-1,6-BISPHOSPHATASE-RELATED"/>
    <property type="match status" value="1"/>
</dbReference>
<dbReference type="PANTHER" id="PTHR11556:SF35">
    <property type="entry name" value="SEDOHEPTULOSE-1,7-BISPHOSPHATASE, CHLOROPLASTIC"/>
    <property type="match status" value="1"/>
</dbReference>
<dbReference type="Pfam" id="PF00316">
    <property type="entry name" value="FBPase"/>
    <property type="match status" value="1"/>
</dbReference>
<dbReference type="Pfam" id="PF18913">
    <property type="entry name" value="FBPase_C"/>
    <property type="match status" value="1"/>
</dbReference>
<dbReference type="PIRSF" id="PIRSF500210">
    <property type="entry name" value="FBPtase"/>
    <property type="match status" value="1"/>
</dbReference>
<dbReference type="PIRSF" id="PIRSF000904">
    <property type="entry name" value="FBPtase_SBPase"/>
    <property type="match status" value="1"/>
</dbReference>
<dbReference type="PRINTS" id="PR00115">
    <property type="entry name" value="F16BPHPHTASE"/>
</dbReference>
<dbReference type="SUPFAM" id="SSF56655">
    <property type="entry name" value="Carbohydrate phosphatase"/>
    <property type="match status" value="1"/>
</dbReference>
<dbReference type="PROSITE" id="PS00124">
    <property type="entry name" value="FBPASE"/>
    <property type="match status" value="1"/>
</dbReference>
<gene>
    <name evidence="1" type="primary">fbp</name>
    <name type="ordered locus">BMEA_B0851</name>
</gene>
<sequence length="340" mass="36156">MTLVGNFSPLVLVGDSDRVEAETVGAYLDGWAGHDKVRLATANAIKAILSGAGRLVGRIARGYLPGDPGKLVGVNSDQDQQKSIDVGSHNLFVELLIAAGVASILSEEADLPVAGKADGLVAVAIDPLDGSGNVGLGAPLGTIFSIFPADVEEPFLQPGNRQIAAGYVSYGNSVDLGFSVGEGVIFATLDPVSGQFHITRRNVKLPERTSDLAFNASVQRHLSAGMQAYVNDAFLGKDGPRGRNFNMRWLGAAVGDMHRIMQRGGLFFYVNDSRPGYEKGRLRLVYEANPIAFLAREAGGKATDGSRPILDIVPQTYHERSALVFGVAEEVDILGEYFVK</sequence>
<protein>
    <recommendedName>
        <fullName evidence="1">Fructose-1,6-bisphosphatase class 1</fullName>
        <shortName evidence="1">FBPase class 1</shortName>
        <ecNumber evidence="1">3.1.3.11</ecNumber>
    </recommendedName>
    <alternativeName>
        <fullName evidence="1">D-fructose-1,6-bisphosphate 1-phosphohydrolase class 1</fullName>
    </alternativeName>
</protein>
<feature type="chain" id="PRO_1000188683" description="Fructose-1,6-bisphosphatase class 1">
    <location>
        <begin position="1"/>
        <end position="340"/>
    </location>
</feature>
<feature type="binding site" evidence="1">
    <location>
        <position position="107"/>
    </location>
    <ligand>
        <name>Mg(2+)</name>
        <dbReference type="ChEBI" id="CHEBI:18420"/>
        <label>1</label>
    </ligand>
</feature>
<feature type="binding site" evidence="1">
    <location>
        <position position="126"/>
    </location>
    <ligand>
        <name>Mg(2+)</name>
        <dbReference type="ChEBI" id="CHEBI:18420"/>
        <label>1</label>
    </ligand>
</feature>
<feature type="binding site" evidence="1">
    <location>
        <position position="126"/>
    </location>
    <ligand>
        <name>Mg(2+)</name>
        <dbReference type="ChEBI" id="CHEBI:18420"/>
        <label>2</label>
    </ligand>
</feature>
<feature type="binding site" evidence="1">
    <location>
        <position position="128"/>
    </location>
    <ligand>
        <name>Mg(2+)</name>
        <dbReference type="ChEBI" id="CHEBI:18420"/>
        <label>1</label>
    </ligand>
</feature>
<feature type="binding site" evidence="1">
    <location>
        <position position="129"/>
    </location>
    <ligand>
        <name>Mg(2+)</name>
        <dbReference type="ChEBI" id="CHEBI:18420"/>
        <label>2</label>
    </ligand>
</feature>
<feature type="binding site" evidence="1">
    <location>
        <position position="215"/>
    </location>
    <ligand>
        <name>substrate</name>
    </ligand>
</feature>
<feature type="binding site" evidence="1">
    <location>
        <position position="287"/>
    </location>
    <ligand>
        <name>Mg(2+)</name>
        <dbReference type="ChEBI" id="CHEBI:18420"/>
        <label>2</label>
    </ligand>
</feature>
<name>F16PA_BRUMB</name>
<accession>C0RM19</accession>
<keyword id="KW-0119">Carbohydrate metabolism</keyword>
<keyword id="KW-0963">Cytoplasm</keyword>
<keyword id="KW-0378">Hydrolase</keyword>
<keyword id="KW-0460">Magnesium</keyword>
<keyword id="KW-0479">Metal-binding</keyword>
<reference key="1">
    <citation type="submission" date="2009-03" db="EMBL/GenBank/DDBJ databases">
        <title>Brucella melitensis ATCC 23457 whole genome shotgun sequencing project.</title>
        <authorList>
            <person name="Setubal J.C."/>
            <person name="Boyle S."/>
            <person name="Crasta O.R."/>
            <person name="Gillespie J.J."/>
            <person name="Kenyon R.W."/>
            <person name="Lu J."/>
            <person name="Mane S."/>
            <person name="Nagrani S."/>
            <person name="Shallom J.M."/>
            <person name="Shallom S."/>
            <person name="Shukla M."/>
            <person name="Snyder E.E."/>
            <person name="Sobral B.W."/>
            <person name="Wattam A.R."/>
            <person name="Will R."/>
            <person name="Williams K."/>
            <person name="Yoo H."/>
            <person name="Munk C."/>
            <person name="Tapia R."/>
            <person name="Han C."/>
            <person name="Detter J.C."/>
            <person name="Bruce D."/>
            <person name="Brettin T.S."/>
        </authorList>
    </citation>
    <scope>NUCLEOTIDE SEQUENCE [LARGE SCALE GENOMIC DNA]</scope>
    <source>
        <strain>ATCC 23457</strain>
    </source>
</reference>